<comment type="function">
    <text evidence="1">Transfers and isomerizes the ribose moiety from AdoMet to the 7-aminomethyl group of 7-deazaguanine (preQ1-tRNA) to give epoxyqueuosine (oQ-tRNA).</text>
</comment>
<comment type="catalytic activity">
    <reaction evidence="1">
        <text>7-aminomethyl-7-carbaguanosine(34) in tRNA + S-adenosyl-L-methionine = epoxyqueuosine(34) in tRNA + adenine + L-methionine + 2 H(+)</text>
        <dbReference type="Rhea" id="RHEA:32155"/>
        <dbReference type="Rhea" id="RHEA-COMP:10342"/>
        <dbReference type="Rhea" id="RHEA-COMP:18582"/>
        <dbReference type="ChEBI" id="CHEBI:15378"/>
        <dbReference type="ChEBI" id="CHEBI:16708"/>
        <dbReference type="ChEBI" id="CHEBI:57844"/>
        <dbReference type="ChEBI" id="CHEBI:59789"/>
        <dbReference type="ChEBI" id="CHEBI:82833"/>
        <dbReference type="ChEBI" id="CHEBI:194443"/>
        <dbReference type="EC" id="2.4.99.17"/>
    </reaction>
</comment>
<comment type="pathway">
    <text evidence="1">tRNA modification; tRNA-queuosine biosynthesis.</text>
</comment>
<comment type="subunit">
    <text evidence="1">Monomer.</text>
</comment>
<comment type="subcellular location">
    <subcellularLocation>
        <location evidence="1">Cytoplasm</location>
    </subcellularLocation>
</comment>
<comment type="similarity">
    <text evidence="1">Belongs to the QueA family.</text>
</comment>
<gene>
    <name evidence="1" type="primary">queA</name>
    <name type="ordered locus">BPUM_2413</name>
</gene>
<accession>A8FFR0</accession>
<dbReference type="EC" id="2.4.99.17" evidence="1"/>
<dbReference type="EMBL" id="CP000813">
    <property type="protein sequence ID" value="ABV63077.1"/>
    <property type="molecule type" value="Genomic_DNA"/>
</dbReference>
<dbReference type="RefSeq" id="WP_012010740.1">
    <property type="nucleotide sequence ID" value="NZ_VEIS01000010.1"/>
</dbReference>
<dbReference type="SMR" id="A8FFR0"/>
<dbReference type="STRING" id="315750.BPUM_2413"/>
<dbReference type="GeneID" id="5621677"/>
<dbReference type="KEGG" id="bpu:BPUM_2413"/>
<dbReference type="eggNOG" id="COG0809">
    <property type="taxonomic scope" value="Bacteria"/>
</dbReference>
<dbReference type="HOGENOM" id="CLU_039110_1_0_9"/>
<dbReference type="OrthoDB" id="9805933at2"/>
<dbReference type="UniPathway" id="UPA00392"/>
<dbReference type="Proteomes" id="UP000001355">
    <property type="component" value="Chromosome"/>
</dbReference>
<dbReference type="GO" id="GO:0005737">
    <property type="term" value="C:cytoplasm"/>
    <property type="evidence" value="ECO:0007669"/>
    <property type="project" value="UniProtKB-SubCell"/>
</dbReference>
<dbReference type="GO" id="GO:0051075">
    <property type="term" value="F:S-adenosylmethionine:tRNA ribosyltransferase-isomerase activity"/>
    <property type="evidence" value="ECO:0007669"/>
    <property type="project" value="UniProtKB-EC"/>
</dbReference>
<dbReference type="GO" id="GO:0008616">
    <property type="term" value="P:queuosine biosynthetic process"/>
    <property type="evidence" value="ECO:0007669"/>
    <property type="project" value="UniProtKB-UniRule"/>
</dbReference>
<dbReference type="GO" id="GO:0002099">
    <property type="term" value="P:tRNA wobble guanine modification"/>
    <property type="evidence" value="ECO:0007669"/>
    <property type="project" value="TreeGrafter"/>
</dbReference>
<dbReference type="FunFam" id="2.40.10.240:FF:000002">
    <property type="entry name" value="S-adenosylmethionine:tRNA ribosyltransferase-isomerase"/>
    <property type="match status" value="1"/>
</dbReference>
<dbReference type="FunFam" id="3.40.1780.10:FF:000001">
    <property type="entry name" value="S-adenosylmethionine:tRNA ribosyltransferase-isomerase"/>
    <property type="match status" value="1"/>
</dbReference>
<dbReference type="Gene3D" id="2.40.10.240">
    <property type="entry name" value="QueA-like"/>
    <property type="match status" value="1"/>
</dbReference>
<dbReference type="Gene3D" id="3.40.1780.10">
    <property type="entry name" value="QueA-like"/>
    <property type="match status" value="1"/>
</dbReference>
<dbReference type="HAMAP" id="MF_00113">
    <property type="entry name" value="QueA"/>
    <property type="match status" value="1"/>
</dbReference>
<dbReference type="InterPro" id="IPR003699">
    <property type="entry name" value="QueA"/>
</dbReference>
<dbReference type="InterPro" id="IPR042118">
    <property type="entry name" value="QueA_dom1"/>
</dbReference>
<dbReference type="InterPro" id="IPR042119">
    <property type="entry name" value="QueA_dom2"/>
</dbReference>
<dbReference type="InterPro" id="IPR036100">
    <property type="entry name" value="QueA_sf"/>
</dbReference>
<dbReference type="NCBIfam" id="NF001140">
    <property type="entry name" value="PRK00147.1"/>
    <property type="match status" value="1"/>
</dbReference>
<dbReference type="NCBIfam" id="TIGR00113">
    <property type="entry name" value="queA"/>
    <property type="match status" value="1"/>
</dbReference>
<dbReference type="PANTHER" id="PTHR30307">
    <property type="entry name" value="S-ADENOSYLMETHIONINE:TRNA RIBOSYLTRANSFERASE-ISOMERASE"/>
    <property type="match status" value="1"/>
</dbReference>
<dbReference type="PANTHER" id="PTHR30307:SF0">
    <property type="entry name" value="S-ADENOSYLMETHIONINE:TRNA RIBOSYLTRANSFERASE-ISOMERASE"/>
    <property type="match status" value="1"/>
</dbReference>
<dbReference type="Pfam" id="PF02547">
    <property type="entry name" value="Queuosine_synth"/>
    <property type="match status" value="1"/>
</dbReference>
<dbReference type="SUPFAM" id="SSF111337">
    <property type="entry name" value="QueA-like"/>
    <property type="match status" value="1"/>
</dbReference>
<feature type="chain" id="PRO_1000057738" description="S-adenosylmethionine:tRNA ribosyltransferase-isomerase">
    <location>
        <begin position="1"/>
        <end position="342"/>
    </location>
</feature>
<sequence>MKLELFDFDLPERLIAQVPLEKRDASRLMVLNKQTGEVTHDTFSQITDYFQTGDCLVLNNTRVLPARLFGMKEDTGAKVELLLLKQEEGDKWETLVKPAKRVKKGTVITFGDGRLQAVCTEELEHGGRKVEFQYTGIFYEVLESLGEMPLPPYIKEQLDDRERYQTVYSKEVGSAAAPTAGLHFTNELLDALKEKGVHIAFITLHVGLGTFRPVSADRIEEHEMHAEFYEMNEETAAELNRVRKEGGRIISVGTTSTRTLETIASAHDGEFKASSGWTSIFIYPGYTFKAIDGMITNFHLPKSSLIMLVSALAGREHVLKAYNEAVKEEYRFFSFGDAMLIQ</sequence>
<protein>
    <recommendedName>
        <fullName evidence="1">S-adenosylmethionine:tRNA ribosyltransferase-isomerase</fullName>
        <ecNumber evidence="1">2.4.99.17</ecNumber>
    </recommendedName>
    <alternativeName>
        <fullName evidence="1">Queuosine biosynthesis protein QueA</fullName>
    </alternativeName>
</protein>
<reference key="1">
    <citation type="journal article" date="2007" name="PLoS ONE">
        <title>Paradoxical DNA repair and peroxide resistance gene conservation in Bacillus pumilus SAFR-032.</title>
        <authorList>
            <person name="Gioia J."/>
            <person name="Yerrapragada S."/>
            <person name="Qin X."/>
            <person name="Jiang H."/>
            <person name="Igboeli O.C."/>
            <person name="Muzny D."/>
            <person name="Dugan-Rocha S."/>
            <person name="Ding Y."/>
            <person name="Hawes A."/>
            <person name="Liu W."/>
            <person name="Perez L."/>
            <person name="Kovar C."/>
            <person name="Dinh H."/>
            <person name="Lee S."/>
            <person name="Nazareth L."/>
            <person name="Blyth P."/>
            <person name="Holder M."/>
            <person name="Buhay C."/>
            <person name="Tirumalai M.R."/>
            <person name="Liu Y."/>
            <person name="Dasgupta I."/>
            <person name="Bokhetache L."/>
            <person name="Fujita M."/>
            <person name="Karouia F."/>
            <person name="Eswara Moorthy P."/>
            <person name="Siefert J."/>
            <person name="Uzman A."/>
            <person name="Buzumbo P."/>
            <person name="Verma A."/>
            <person name="Zwiya H."/>
            <person name="McWilliams B.D."/>
            <person name="Olowu A."/>
            <person name="Clinkenbeard K.D."/>
            <person name="Newcombe D."/>
            <person name="Golebiewski L."/>
            <person name="Petrosino J.F."/>
            <person name="Nicholson W.L."/>
            <person name="Fox G.E."/>
            <person name="Venkateswaran K."/>
            <person name="Highlander S.K."/>
            <person name="Weinstock G.M."/>
        </authorList>
    </citation>
    <scope>NUCLEOTIDE SEQUENCE [LARGE SCALE GENOMIC DNA]</scope>
    <source>
        <strain>SAFR-032</strain>
    </source>
</reference>
<evidence type="ECO:0000255" key="1">
    <source>
        <dbReference type="HAMAP-Rule" id="MF_00113"/>
    </source>
</evidence>
<organism>
    <name type="scientific">Bacillus pumilus (strain SAFR-032)</name>
    <dbReference type="NCBI Taxonomy" id="315750"/>
    <lineage>
        <taxon>Bacteria</taxon>
        <taxon>Bacillati</taxon>
        <taxon>Bacillota</taxon>
        <taxon>Bacilli</taxon>
        <taxon>Bacillales</taxon>
        <taxon>Bacillaceae</taxon>
        <taxon>Bacillus</taxon>
    </lineage>
</organism>
<keyword id="KW-0963">Cytoplasm</keyword>
<keyword id="KW-0671">Queuosine biosynthesis</keyword>
<keyword id="KW-0949">S-adenosyl-L-methionine</keyword>
<keyword id="KW-0808">Transferase</keyword>
<proteinExistence type="inferred from homology"/>
<name>QUEA_BACP2</name>